<gene>
    <name evidence="1" type="primary">rlmN</name>
    <name type="ordered locus">PMT9312_1574</name>
</gene>
<sequence length="348" mass="39552">MKNLLGSSIKDLENIALDYGQAAFRGRQIYSWIYNYRNKNKNIDQIEVLPLDFRKKLKDDGFKVSELSFQEKKLANDGTLKLLLSTNDNESIECVGIPTEKRLTACLSSQVGCPMDCKFCATGKEGLKRSLKASEILDQILFIENEMNRKVTNIVFMGMGEPLLNIDELLLSIRSINEDFQISQRKITVSTVAVPKMMSKLSARSFQILGNCQFTLAISLHASNQKTRETIIPSAKNYEIKNIIEDSKQFVKDTGRRVSFEYLMLSGVNDKLEHANELSNLLRGFQCHVNLIQYNQIDEVEFKRASLKNLQLFQSRLSNNGITVSFRKSRGLDKNAACGQLRQNARNK</sequence>
<evidence type="ECO:0000255" key="1">
    <source>
        <dbReference type="HAMAP-Rule" id="MF_01849"/>
    </source>
</evidence>
<evidence type="ECO:0000255" key="2">
    <source>
        <dbReference type="PROSITE-ProRule" id="PRU01266"/>
    </source>
</evidence>
<name>RLMN_PROM9</name>
<organism>
    <name type="scientific">Prochlorococcus marinus (strain MIT 9312)</name>
    <dbReference type="NCBI Taxonomy" id="74546"/>
    <lineage>
        <taxon>Bacteria</taxon>
        <taxon>Bacillati</taxon>
        <taxon>Cyanobacteriota</taxon>
        <taxon>Cyanophyceae</taxon>
        <taxon>Synechococcales</taxon>
        <taxon>Prochlorococcaceae</taxon>
        <taxon>Prochlorococcus</taxon>
    </lineage>
</organism>
<accession>Q318R1</accession>
<keyword id="KW-0004">4Fe-4S</keyword>
<keyword id="KW-0963">Cytoplasm</keyword>
<keyword id="KW-1015">Disulfide bond</keyword>
<keyword id="KW-0408">Iron</keyword>
<keyword id="KW-0411">Iron-sulfur</keyword>
<keyword id="KW-0479">Metal-binding</keyword>
<keyword id="KW-0489">Methyltransferase</keyword>
<keyword id="KW-0698">rRNA processing</keyword>
<keyword id="KW-0949">S-adenosyl-L-methionine</keyword>
<keyword id="KW-0808">Transferase</keyword>
<keyword id="KW-0819">tRNA processing</keyword>
<reference key="1">
    <citation type="journal article" date="2006" name="Science">
        <title>Genomic islands and the ecology and evolution of Prochlorococcus.</title>
        <authorList>
            <person name="Coleman M.L."/>
            <person name="Sullivan M.B."/>
            <person name="Martiny A.C."/>
            <person name="Steglich C."/>
            <person name="Barry K."/>
            <person name="Delong E.F."/>
            <person name="Chisholm S.W."/>
        </authorList>
    </citation>
    <scope>NUCLEOTIDE SEQUENCE [LARGE SCALE GENOMIC DNA]</scope>
    <source>
        <strain>MIT 9312</strain>
    </source>
</reference>
<dbReference type="EC" id="2.1.1.192" evidence="1"/>
<dbReference type="EMBL" id="CP000111">
    <property type="protein sequence ID" value="ABB50634.1"/>
    <property type="molecule type" value="Genomic_DNA"/>
</dbReference>
<dbReference type="RefSeq" id="WP_011377116.1">
    <property type="nucleotide sequence ID" value="NC_007577.1"/>
</dbReference>
<dbReference type="SMR" id="Q318R1"/>
<dbReference type="STRING" id="74546.PMT9312_1574"/>
<dbReference type="KEGG" id="pmi:PMT9312_1574"/>
<dbReference type="eggNOG" id="COG0820">
    <property type="taxonomic scope" value="Bacteria"/>
</dbReference>
<dbReference type="HOGENOM" id="CLU_029101_1_1_3"/>
<dbReference type="OrthoDB" id="9793973at2"/>
<dbReference type="Proteomes" id="UP000002715">
    <property type="component" value="Chromosome"/>
</dbReference>
<dbReference type="GO" id="GO:0005737">
    <property type="term" value="C:cytoplasm"/>
    <property type="evidence" value="ECO:0007669"/>
    <property type="project" value="UniProtKB-SubCell"/>
</dbReference>
<dbReference type="GO" id="GO:0051539">
    <property type="term" value="F:4 iron, 4 sulfur cluster binding"/>
    <property type="evidence" value="ECO:0007669"/>
    <property type="project" value="UniProtKB-UniRule"/>
</dbReference>
<dbReference type="GO" id="GO:0046872">
    <property type="term" value="F:metal ion binding"/>
    <property type="evidence" value="ECO:0007669"/>
    <property type="project" value="UniProtKB-KW"/>
</dbReference>
<dbReference type="GO" id="GO:0070040">
    <property type="term" value="F:rRNA (adenine(2503)-C2-)-methyltransferase activity"/>
    <property type="evidence" value="ECO:0007669"/>
    <property type="project" value="UniProtKB-UniRule"/>
</dbReference>
<dbReference type="GO" id="GO:0019843">
    <property type="term" value="F:rRNA binding"/>
    <property type="evidence" value="ECO:0007669"/>
    <property type="project" value="UniProtKB-UniRule"/>
</dbReference>
<dbReference type="GO" id="GO:0002935">
    <property type="term" value="F:tRNA (adenine(37)-C2)-methyltransferase activity"/>
    <property type="evidence" value="ECO:0007669"/>
    <property type="project" value="UniProtKB-UniRule"/>
</dbReference>
<dbReference type="GO" id="GO:0000049">
    <property type="term" value="F:tRNA binding"/>
    <property type="evidence" value="ECO:0007669"/>
    <property type="project" value="UniProtKB-UniRule"/>
</dbReference>
<dbReference type="GO" id="GO:0070475">
    <property type="term" value="P:rRNA base methylation"/>
    <property type="evidence" value="ECO:0007669"/>
    <property type="project" value="UniProtKB-UniRule"/>
</dbReference>
<dbReference type="GO" id="GO:0030488">
    <property type="term" value="P:tRNA methylation"/>
    <property type="evidence" value="ECO:0007669"/>
    <property type="project" value="UniProtKB-UniRule"/>
</dbReference>
<dbReference type="CDD" id="cd01335">
    <property type="entry name" value="Radical_SAM"/>
    <property type="match status" value="1"/>
</dbReference>
<dbReference type="FunFam" id="3.20.20.70:FF:000014">
    <property type="entry name" value="Probable dual-specificity RNA methyltransferase RlmN"/>
    <property type="match status" value="1"/>
</dbReference>
<dbReference type="Gene3D" id="1.10.150.530">
    <property type="match status" value="1"/>
</dbReference>
<dbReference type="Gene3D" id="3.20.20.70">
    <property type="entry name" value="Aldolase class I"/>
    <property type="match status" value="1"/>
</dbReference>
<dbReference type="HAMAP" id="MF_01849">
    <property type="entry name" value="RNA_methyltr_RlmN"/>
    <property type="match status" value="1"/>
</dbReference>
<dbReference type="InterPro" id="IPR013785">
    <property type="entry name" value="Aldolase_TIM"/>
</dbReference>
<dbReference type="InterPro" id="IPR040072">
    <property type="entry name" value="Methyltransferase_A"/>
</dbReference>
<dbReference type="InterPro" id="IPR048641">
    <property type="entry name" value="RlmN_N"/>
</dbReference>
<dbReference type="InterPro" id="IPR027492">
    <property type="entry name" value="RNA_MTrfase_RlmN"/>
</dbReference>
<dbReference type="InterPro" id="IPR004383">
    <property type="entry name" value="rRNA_lsu_MTrfase_RlmN/Cfr"/>
</dbReference>
<dbReference type="InterPro" id="IPR007197">
    <property type="entry name" value="rSAM"/>
</dbReference>
<dbReference type="NCBIfam" id="TIGR00048">
    <property type="entry name" value="rRNA_mod_RlmN"/>
    <property type="match status" value="1"/>
</dbReference>
<dbReference type="PANTHER" id="PTHR30544">
    <property type="entry name" value="23S RRNA METHYLTRANSFERASE"/>
    <property type="match status" value="1"/>
</dbReference>
<dbReference type="PANTHER" id="PTHR30544:SF5">
    <property type="entry name" value="RADICAL SAM CORE DOMAIN-CONTAINING PROTEIN"/>
    <property type="match status" value="1"/>
</dbReference>
<dbReference type="Pfam" id="PF13353">
    <property type="entry name" value="Fer4_12"/>
    <property type="match status" value="1"/>
</dbReference>
<dbReference type="Pfam" id="PF04055">
    <property type="entry name" value="Radical_SAM"/>
    <property type="match status" value="1"/>
</dbReference>
<dbReference type="Pfam" id="PF21016">
    <property type="entry name" value="RlmN_N"/>
    <property type="match status" value="1"/>
</dbReference>
<dbReference type="PIRSF" id="PIRSF006004">
    <property type="entry name" value="CHP00048"/>
    <property type="match status" value="1"/>
</dbReference>
<dbReference type="SFLD" id="SFLDF00275">
    <property type="entry name" value="adenosine_C2_methyltransferase"/>
    <property type="match status" value="1"/>
</dbReference>
<dbReference type="SFLD" id="SFLDS00029">
    <property type="entry name" value="Radical_SAM"/>
    <property type="match status" value="1"/>
</dbReference>
<dbReference type="SUPFAM" id="SSF102114">
    <property type="entry name" value="Radical SAM enzymes"/>
    <property type="match status" value="1"/>
</dbReference>
<dbReference type="PROSITE" id="PS51918">
    <property type="entry name" value="RADICAL_SAM"/>
    <property type="match status" value="1"/>
</dbReference>
<comment type="function">
    <text evidence="1">Specifically methylates position 2 of adenine 2503 in 23S rRNA and position 2 of adenine 37 in tRNAs.</text>
</comment>
<comment type="catalytic activity">
    <reaction evidence="1">
        <text>adenosine(2503) in 23S rRNA + 2 reduced [2Fe-2S]-[ferredoxin] + 2 S-adenosyl-L-methionine = 2-methyladenosine(2503) in 23S rRNA + 5'-deoxyadenosine + L-methionine + 2 oxidized [2Fe-2S]-[ferredoxin] + S-adenosyl-L-homocysteine</text>
        <dbReference type="Rhea" id="RHEA:42916"/>
        <dbReference type="Rhea" id="RHEA-COMP:10000"/>
        <dbReference type="Rhea" id="RHEA-COMP:10001"/>
        <dbReference type="Rhea" id="RHEA-COMP:10152"/>
        <dbReference type="Rhea" id="RHEA-COMP:10282"/>
        <dbReference type="ChEBI" id="CHEBI:17319"/>
        <dbReference type="ChEBI" id="CHEBI:33737"/>
        <dbReference type="ChEBI" id="CHEBI:33738"/>
        <dbReference type="ChEBI" id="CHEBI:57844"/>
        <dbReference type="ChEBI" id="CHEBI:57856"/>
        <dbReference type="ChEBI" id="CHEBI:59789"/>
        <dbReference type="ChEBI" id="CHEBI:74411"/>
        <dbReference type="ChEBI" id="CHEBI:74497"/>
        <dbReference type="EC" id="2.1.1.192"/>
    </reaction>
</comment>
<comment type="catalytic activity">
    <reaction evidence="1">
        <text>adenosine(37) in tRNA + 2 reduced [2Fe-2S]-[ferredoxin] + 2 S-adenosyl-L-methionine = 2-methyladenosine(37) in tRNA + 5'-deoxyadenosine + L-methionine + 2 oxidized [2Fe-2S]-[ferredoxin] + S-adenosyl-L-homocysteine</text>
        <dbReference type="Rhea" id="RHEA:43332"/>
        <dbReference type="Rhea" id="RHEA-COMP:10000"/>
        <dbReference type="Rhea" id="RHEA-COMP:10001"/>
        <dbReference type="Rhea" id="RHEA-COMP:10162"/>
        <dbReference type="Rhea" id="RHEA-COMP:10485"/>
        <dbReference type="ChEBI" id="CHEBI:17319"/>
        <dbReference type="ChEBI" id="CHEBI:33737"/>
        <dbReference type="ChEBI" id="CHEBI:33738"/>
        <dbReference type="ChEBI" id="CHEBI:57844"/>
        <dbReference type="ChEBI" id="CHEBI:57856"/>
        <dbReference type="ChEBI" id="CHEBI:59789"/>
        <dbReference type="ChEBI" id="CHEBI:74411"/>
        <dbReference type="ChEBI" id="CHEBI:74497"/>
        <dbReference type="EC" id="2.1.1.192"/>
    </reaction>
</comment>
<comment type="cofactor">
    <cofactor evidence="1">
        <name>[4Fe-4S] cluster</name>
        <dbReference type="ChEBI" id="CHEBI:49883"/>
    </cofactor>
    <text evidence="1">Binds 1 [4Fe-4S] cluster. The cluster is coordinated with 3 cysteines and an exchangeable S-adenosyl-L-methionine.</text>
</comment>
<comment type="subcellular location">
    <subcellularLocation>
        <location evidence="1">Cytoplasm</location>
    </subcellularLocation>
</comment>
<comment type="miscellaneous">
    <text evidence="1">Reaction proceeds by a ping-pong mechanism involving intermediate methylation of a conserved cysteine residue.</text>
</comment>
<comment type="similarity">
    <text evidence="1">Belongs to the radical SAM superfamily. RlmN family.</text>
</comment>
<protein>
    <recommendedName>
        <fullName evidence="1">Probable dual-specificity RNA methyltransferase RlmN</fullName>
        <ecNumber evidence="1">2.1.1.192</ecNumber>
    </recommendedName>
    <alternativeName>
        <fullName evidence="1">23S rRNA (adenine(2503)-C(2))-methyltransferase</fullName>
    </alternativeName>
    <alternativeName>
        <fullName evidence="1">23S rRNA m2A2503 methyltransferase</fullName>
    </alternativeName>
    <alternativeName>
        <fullName evidence="1">Ribosomal RNA large subunit methyltransferase N</fullName>
    </alternativeName>
    <alternativeName>
        <fullName evidence="1">tRNA (adenine(37)-C(2))-methyltransferase</fullName>
    </alternativeName>
    <alternativeName>
        <fullName evidence="1">tRNA m2A37 methyltransferase</fullName>
    </alternativeName>
</protein>
<proteinExistence type="inferred from homology"/>
<feature type="chain" id="PRO_0000350318" description="Probable dual-specificity RNA methyltransferase RlmN">
    <location>
        <begin position="1"/>
        <end position="348"/>
    </location>
</feature>
<feature type="domain" description="Radical SAM core" evidence="2">
    <location>
        <begin position="99"/>
        <end position="333"/>
    </location>
</feature>
<feature type="active site" description="Proton acceptor" evidence="1">
    <location>
        <position position="93"/>
    </location>
</feature>
<feature type="active site" description="S-methylcysteine intermediate" evidence="1">
    <location>
        <position position="338"/>
    </location>
</feature>
<feature type="binding site" evidence="1">
    <location>
        <position position="113"/>
    </location>
    <ligand>
        <name>[4Fe-4S] cluster</name>
        <dbReference type="ChEBI" id="CHEBI:49883"/>
        <note>4Fe-4S-S-AdoMet</note>
    </ligand>
</feature>
<feature type="binding site" evidence="1">
    <location>
        <position position="117"/>
    </location>
    <ligand>
        <name>[4Fe-4S] cluster</name>
        <dbReference type="ChEBI" id="CHEBI:49883"/>
        <note>4Fe-4S-S-AdoMet</note>
    </ligand>
</feature>
<feature type="binding site" evidence="1">
    <location>
        <position position="120"/>
    </location>
    <ligand>
        <name>[4Fe-4S] cluster</name>
        <dbReference type="ChEBI" id="CHEBI:49883"/>
        <note>4Fe-4S-S-AdoMet</note>
    </ligand>
</feature>
<feature type="binding site" evidence="1">
    <location>
        <begin position="160"/>
        <end position="161"/>
    </location>
    <ligand>
        <name>S-adenosyl-L-methionine</name>
        <dbReference type="ChEBI" id="CHEBI:59789"/>
    </ligand>
</feature>
<feature type="binding site" evidence="1">
    <location>
        <position position="190"/>
    </location>
    <ligand>
        <name>S-adenosyl-L-methionine</name>
        <dbReference type="ChEBI" id="CHEBI:59789"/>
    </ligand>
</feature>
<feature type="binding site" evidence="1">
    <location>
        <begin position="219"/>
        <end position="221"/>
    </location>
    <ligand>
        <name>S-adenosyl-L-methionine</name>
        <dbReference type="ChEBI" id="CHEBI:59789"/>
    </ligand>
</feature>
<feature type="binding site" evidence="1">
    <location>
        <position position="295"/>
    </location>
    <ligand>
        <name>S-adenosyl-L-methionine</name>
        <dbReference type="ChEBI" id="CHEBI:59789"/>
    </ligand>
</feature>
<feature type="disulfide bond" description="(transient)" evidence="1">
    <location>
        <begin position="106"/>
        <end position="338"/>
    </location>
</feature>